<reference key="1">
    <citation type="journal article" date="1996" name="Proc. Natl. Acad. Sci. U.S.A.">
        <title>Cystic fibrosis gene encodes a cAMP-dependent chloride channel in heart.</title>
        <authorList>
            <person name="Hart P.H."/>
            <person name="Warth J.D."/>
            <person name="Levesque P.C."/>
            <person name="Collier M.L."/>
            <person name="Geary Y."/>
            <person name="Horowitz B."/>
            <person name="Hume J.R."/>
        </authorList>
    </citation>
    <scope>NUCLEOTIDE SEQUENCE [MRNA] (ISOFORM 2)</scope>
    <source>
        <tissue>Heart ventricle</tissue>
    </source>
</reference>
<reference key="2">
    <citation type="submission" date="1999-09" db="EMBL/GenBank/DDBJ databases">
        <title>Oryctolagus cuniculus cornea epithelium CFTR chloride channel mRNA.</title>
        <authorList>
            <person name="Rae J.L."/>
        </authorList>
    </citation>
    <scope>NUCLEOTIDE SEQUENCE [MRNA] (ISOFORM 1)</scope>
    <source>
        <strain>New Zealand white</strain>
        <tissue>Cornea</tissue>
    </source>
</reference>
<reference key="3">
    <citation type="submission" date="2006-09" db="EMBL/GenBank/DDBJ databases">
        <title>NISC comparative sequencing initiative.</title>
        <authorList>
            <person name="Antonellis A."/>
            <person name="Ayele K."/>
            <person name="Benjamin B."/>
            <person name="Blakesley R.W."/>
            <person name="Boakye A."/>
            <person name="Bouffard G.G."/>
            <person name="Brinkley C."/>
            <person name="Brooks S."/>
            <person name="Chu G."/>
            <person name="Coleman H."/>
            <person name="Engle J."/>
            <person name="Gestole M."/>
            <person name="Greene A."/>
            <person name="Guan X."/>
            <person name="Gupta J."/>
            <person name="Haghighi P."/>
            <person name="Han J."/>
            <person name="Hansen N."/>
            <person name="Ho S.-L."/>
            <person name="Hu P."/>
            <person name="Hunter G."/>
            <person name="Hurle B."/>
            <person name="Idol J.R."/>
            <person name="Kwong P."/>
            <person name="Laric P."/>
            <person name="Larson S."/>
            <person name="Lee-Lin S.-Q."/>
            <person name="Legaspi R."/>
            <person name="Madden M."/>
            <person name="Maduro Q.L."/>
            <person name="Maduro V.B."/>
            <person name="Margulies E.H."/>
            <person name="Masiello C."/>
            <person name="Maskeri B."/>
            <person name="McDowell J."/>
            <person name="Mojidi H.A."/>
            <person name="Mullikin J.C."/>
            <person name="Oestreicher J.S."/>
            <person name="Park M."/>
            <person name="Portnoy M.E."/>
            <person name="Prasad A."/>
            <person name="Puri O."/>
            <person name="Reddix-Dugue N."/>
            <person name="Schandler K."/>
            <person name="Schueler M.G."/>
            <person name="Sison C."/>
            <person name="Stantripop S."/>
            <person name="Stephen E."/>
            <person name="Taye A."/>
            <person name="Thomas J.W."/>
            <person name="Thomas P.J."/>
            <person name="Tsipouri V."/>
            <person name="Ung L."/>
            <person name="Vogt J.L."/>
            <person name="Wetherby K.D."/>
            <person name="Young A."/>
            <person name="Green E.D."/>
        </authorList>
    </citation>
    <scope>NUCLEOTIDE SEQUENCE [LARGE SCALE GENOMIC DNA]</scope>
</reference>
<reference key="4">
    <citation type="journal article" date="1993" name="Am. J. Physiol.">
        <title>Alternative splicing of CFTR Cl- channels in heart.</title>
        <authorList>
            <person name="Horowitz B."/>
            <person name="Tsung S.S."/>
            <person name="Hart P."/>
            <person name="Levesque P.C."/>
            <person name="Hume J.R."/>
        </authorList>
    </citation>
    <scope>NUCLEOTIDE SEQUENCE [MRNA] OF 90-339 AND 847-1156 (ISOFORM 2)</scope>
    <scope>TISSUE SPECIFICITY</scope>
    <source>
        <tissue>Heart ventricle</tissue>
    </source>
</reference>
<reference key="5">
    <citation type="submission" date="1999-09" db="EMBL/GenBank/DDBJ databases">
        <title>Partial cDNA sequence of the rabbit colonic chloride channel, CFTR.</title>
        <authorList>
            <person name="Selvaraj N."/>
            <person name="Prasad R."/>
            <person name="Rao M.C."/>
        </authorList>
    </citation>
    <scope>NUCLEOTIDE SEQUENCE [MRNA] OF 127-287 (ISOFORM 1)</scope>
    <source>
        <strain>New Zealand white</strain>
        <tissue>Colon</tissue>
    </source>
</reference>
<reference key="6">
    <citation type="journal article" date="1992" name="Circ. Res.">
        <title>Expression of cystic fibrosis transmembrane regulator Cl- channels in heart.</title>
        <authorList>
            <person name="Levesque P.C."/>
            <person name="Hart P.J."/>
            <person name="Hume J.R."/>
            <person name="Kenyon J.L."/>
            <person name="Horowitz B."/>
        </authorList>
    </citation>
    <scope>NUCLEOTIDE SEQUENCE [MRNA] OF 423-592</scope>
    <scope>TISSUE SPECIFICITY</scope>
    <source>
        <tissue>Heart ventricle</tissue>
    </source>
</reference>
<reference key="7">
    <citation type="journal article" date="1991" name="J. Biol. Chem.">
        <title>A cross-species analysis of the cystic fibrosis transmembrane conductance regulator. Potential functional domains and regulatory sites.</title>
        <authorList>
            <person name="Diamond G."/>
            <person name="Scanlin T.F."/>
            <person name="Zasloff M.A."/>
            <person name="Bevins C.L."/>
        </authorList>
    </citation>
    <scope>NUCLEOTIDE SEQUENCE [GENOMIC DNA] OF 604-776</scope>
</reference>
<accession>Q00554</accession>
<accession>Q09YM9</accession>
<accession>Q9TSD4</accession>
<accession>Q9TTX9</accession>
<accession>Q9TTY9</accession>
<gene>
    <name evidence="1" type="primary">CFTR</name>
    <name type="synonym">ABCC7</name>
</gene>
<organism>
    <name type="scientific">Oryctolagus cuniculus</name>
    <name type="common">Rabbit</name>
    <dbReference type="NCBI Taxonomy" id="9986"/>
    <lineage>
        <taxon>Eukaryota</taxon>
        <taxon>Metazoa</taxon>
        <taxon>Chordata</taxon>
        <taxon>Craniata</taxon>
        <taxon>Vertebrata</taxon>
        <taxon>Euteleostomi</taxon>
        <taxon>Mammalia</taxon>
        <taxon>Eutheria</taxon>
        <taxon>Euarchontoglires</taxon>
        <taxon>Glires</taxon>
        <taxon>Lagomorpha</taxon>
        <taxon>Leporidae</taxon>
        <taxon>Oryctolagus</taxon>
    </lineage>
</organism>
<comment type="function">
    <text evidence="1 2">Epithelial ion channel that plays an important role in the regulation of epithelial ion and water transport and fluid homeostasis. Mediates the transport of chloride ions across the cell membrane (By similarity). Possesses an intrinsic ATPase activity and utilizes ATP to gate its channel; the passive flow of anions through the channel is gated by cycles of ATP binding and hydrolysis by the ATP-binding domains (By similarity). The ion channel is also permeable to HCO(3)(-); selectivity depends on the extracellular chloride concentration. Exerts its function also by modulating the activity of other ion channels and transporters. Contributes to the regulation of the pH and the ion content of the epithelial fluid layer. Modulates the activity of the epithelial sodium channel (ENaC) complex, in part by regulating the cell surface expression of the ENaC complex. May regulate bicarbonate secretion and salvage in epithelial cells by regulating the transporter SLC4A7. Can inhibit the chloride channel activity of ANO1 (By similarity). Plays a role in the chloride and bicarbonate homeostasis during sperm epididymal maturation and capacitation (By similarity).</text>
</comment>
<comment type="catalytic activity">
    <reaction evidence="1">
        <text>ATP + H2O + closed Cl(-) channel = ADP + phosphate + open Cl(-) channel.</text>
        <dbReference type="EC" id="5.6.1.6"/>
    </reaction>
</comment>
<comment type="catalytic activity">
    <reaction evidence="1">
        <text>chloride(in) = chloride(out)</text>
        <dbReference type="Rhea" id="RHEA:29823"/>
        <dbReference type="ChEBI" id="CHEBI:17996"/>
    </reaction>
</comment>
<comment type="catalytic activity">
    <reaction evidence="1">
        <text>hydrogencarbonate(in) = hydrogencarbonate(out)</text>
        <dbReference type="Rhea" id="RHEA:28695"/>
        <dbReference type="ChEBI" id="CHEBI:17544"/>
    </reaction>
</comment>
<comment type="catalytic activity">
    <reaction evidence="1">
        <text>ATP + H2O = ADP + phosphate + H(+)</text>
        <dbReference type="Rhea" id="RHEA:13065"/>
        <dbReference type="ChEBI" id="CHEBI:15377"/>
        <dbReference type="ChEBI" id="CHEBI:15378"/>
        <dbReference type="ChEBI" id="CHEBI:30616"/>
        <dbReference type="ChEBI" id="CHEBI:43474"/>
        <dbReference type="ChEBI" id="CHEBI:456216"/>
    </reaction>
    <physiologicalReaction direction="left-to-right" evidence="1">
        <dbReference type="Rhea" id="RHEA:13066"/>
    </physiologicalReaction>
</comment>
<comment type="subunit">
    <text evidence="1 2 3">Monomer; does not require oligomerization for channel activity. May form oligomers in the membrane (By similarity). Interacts with SLC26A3, SLC26A6 and NHERF1 (By similarity). Interacts with SHANK2 (By similarity). Interacts with MYO6 (By similarity). Interacts (via C-terminus) with GOPC (via PDZ domain); this promotes CFTR internalization and thereby decreases channel activity. Interacts with SLC4A7 through NHERF1. Found in a complex with MYO5B and RAB11A. Interacts with ANO1. Interacts with SLC26A8 (By similarity). Interacts with AHCYL1; the interaction increases CFTR activity (By similarity). Interacts with CSE1L (By similarity). The core-glycosylated form interacts with GORASP2 (via PDZ GRASP-type 1 domain) in respone to ER stress (By similarity). Interacts with MARCHF2; the interaction leads to CFTR ubiqtuitination and degradation (By similarity). Interacts with ADGRG2 (By similarity).</text>
</comment>
<comment type="subcellular location">
    <subcellularLocation>
        <location evidence="2">Apical cell membrane</location>
        <topology evidence="1">Multi-pass membrane protein</topology>
    </subcellularLocation>
    <subcellularLocation>
        <location evidence="1">Early endosome membrane</location>
        <topology evidence="1">Multi-pass membrane protein</topology>
    </subcellularLocation>
    <subcellularLocation>
        <location evidence="2">Cell membrane</location>
        <topology evidence="1">Multi-pass membrane protein</topology>
    </subcellularLocation>
    <subcellularLocation>
        <location evidence="1">Recycling endosome membrane</location>
        <topology evidence="1">Multi-pass membrane protein</topology>
    </subcellularLocation>
    <subcellularLocation>
        <location evidence="1">Endoplasmic reticulum membrane</location>
        <topology evidence="1">Multi-pass membrane protein</topology>
    </subcellularLocation>
    <subcellularLocation>
        <location evidence="3">Nucleus</location>
    </subcellularLocation>
    <text evidence="1 3">The channel is internalized from the cell surface into an endosomal recycling compartment, from where it is recycled to the cell membrane. In the oviduct and bronchus, detected on the apical side of epithelial cells, but not associated with cilia. In Sertoli cells, a processed product is detected in the nucleus. ER stress induces GORASP2-mediated unconventional (ER/Golgi-independent) trafficking of core-glycosylated CFTR to cell membrane.</text>
</comment>
<comment type="alternative products">
    <event type="alternative splicing"/>
    <isoform>
        <id>Q00554-1</id>
        <name>1</name>
        <sequence type="displayed"/>
    </isoform>
    <isoform>
        <id>Q00554-2</id>
        <name>2</name>
        <sequence type="described" ref="VSP_028888"/>
    </isoform>
</comment>
<comment type="tissue specificity">
    <text evidence="8 9">Isoform 1 is expressed in the pancreas. Isoform 2 is specifically expressed in the ventricle.</text>
</comment>
<comment type="domain">
    <text evidence="1 2">Binds and hydrolyzes ATP via the two cytoplasmic ABC transporter nucleotide-binding domains. The two ATP-binding domains interact with each other, forming a head-to-tail dimer. Normal ATPase activity requires interaction between the two domains. The first ABC transporter nucleotide-binding domain has no ATPase activity by itself.</text>
</comment>
<comment type="domain">
    <text evidence="1">The PDZ-binding motif mediates interactions with GOPC and with the SLC4A7, NHERF1/EBP50 complex.</text>
</comment>
<comment type="domain">
    <text evidence="1">The disordered R region mediates channel activation when it is phosphorylated, but not in the absence of phosphorylation.</text>
</comment>
<comment type="PTM">
    <text evidence="1">N-glycosylated.</text>
</comment>
<comment type="PTM">
    <text evidence="1">Phosphorylated; cAMP treatment promotes phosphorylation and activates the channel. Dephosphorylation decreases the ATPase activity (in vitro). Phosphorylation at PKA sites activates the channel. Phosphorylation at PKC sites enhances the response to phosphorylation by PKA. Phosphorylated by AMPK; this inhibits channel activity.</text>
</comment>
<comment type="PTM">
    <text evidence="1">Ubiquitinated, leading to its degradation in the lysosome. Deubiquitination by USP10 in early endosomes enhances its endocytic recycling to the cell membrane. Ubiquitinated by RNF185 during ER stress. Ubiquitinated by MARCHF2 (By similarity).</text>
</comment>
<comment type="similarity">
    <text evidence="12">Belongs to the ABC transporter superfamily. ABCC family. CFTR transporter (TC 3.A.1.202) subfamily.</text>
</comment>
<sequence length="1481" mass="168042">MQKSPLEKAGVLSKLFFSWTRPILRKGYRQRLELSDIYQIPSADSADNLSEKLEREWDRELASKKKPKLINALRRCFFWRFMFYGILLYLGEVTKAVQPLLLGRIIASYDPDNKVERSIAIYLGIGLCLLFVVRTLLLHPAIFGLHHIGMQMRIAMFSLIYKKTLKLSSRVLDKISIGQLISLLSNNLNKFDEGLALAHFVWISPLQVTLLMGLLWELLQASAFCGLAFLIVLALVQAGLGRMMMKYRDQRAGKINERLVITSEMIENIQSVKAYCWEEAMEKMIENLRQTELKLTRKAAYVRYFNSSAFFFSGFFVVFLSVLPYALTKGIILRKIFTTISFCIVLRMAVTRQFPWAVQTWYDSLGAINKIQDFLQKQEYKTLEYNLTTTEVVMDNVTAFWEEGFGELFEKAKQNNSDRKISNGDNNLFFSNFSLLGAPVLKDISFKIERGQLLAVAGSTGAGKTSLLMMIMGELEPSEGKIKHSGRISFCSQFSWIMPGTIKENIIFGVSYDEYRYKSVIKACQLEEDISKFTEKDNTVLGEGGITLSGGQRARISLARAVYKDADLYLLDSPFGYLDVLTEKEIFESCVCKLMANKTRILVTSKMEHLKKADKILILHEGSSYFYGTFSELQSLRPDFSSKLMGYDSFDQFSAERRNSILTETLRRFSLEGDASISWNDTRKQSFKQNGELGEKRKNSILNPVNSMRKFSIVPKTPLQMNGIEEDSDASIERRLSLVPDSEQGEAILPRSNMINTGPMLQGCRRQSVLNLMTHSVSQGPSIYRRTTTSARKMSLAPQTNLTEMDIYSRRLSQESGLEISEEINEEDLKECFIDDVDSIPTVTTWNTYLRYITVHRSLIFVLIWCIVIFLAEVAASLVVLWLFGNTAPQDKENSTKSGNSSYAVIITNTSSYYFFYIYVGVADTLLALGLFRGLPLVHTLITVSKILHHKMLHSVLQAPMSTLNTLKAGGILNRFSKDIAILDDLLPLTIFDFIQLLLIVVGAIAVVSVLQPYIFLATVPVIAAFILLRAYFLHTSQQLKQLESEGRSPIFTHLVTSLKGLWTLRAFGRQPYFETLFHKALNLHTANWFLYLSTLRWFQMRIEMIFVLFFIAVAFISILTTGEGEGRVGIILTLAMNIMSTLQWAVNSSIDVDSLMRSVSRVFKFIDMPTEETKSTKSIKPSSNCQLSKVMIIENQHVKKDDVWPSGGQMTVKGLTAKYIDSGNAILENISFSISPGQRVGLLGRTGSGKSTLLSAFLRLLNTEGEIQIDGVSWDSITLQQWRKAFGVIPQKVFIFSGTFRKNLDPYEQWSDQEIWKVADEVGLRSVIEQFPGKLDFVLVDGGYVLSHGHKQLMCLARSVLSKAKILLLDEPSAHLDPITYQIIRRTLKQAFADCTVILCEHRIEAMLECQRFLVIEENTVRQYESIQKLLSEKSLFRQAISSSDRAKLFPHRNSSKHKSRPQITALKEEAEEEVQGTRL</sequence>
<evidence type="ECO:0000250" key="1">
    <source>
        <dbReference type="UniProtKB" id="P13569"/>
    </source>
</evidence>
<evidence type="ECO:0000250" key="2">
    <source>
        <dbReference type="UniProtKB" id="P26361"/>
    </source>
</evidence>
<evidence type="ECO:0000250" key="3">
    <source>
        <dbReference type="UniProtKB" id="P34158"/>
    </source>
</evidence>
<evidence type="ECO:0000255" key="4"/>
<evidence type="ECO:0000255" key="5">
    <source>
        <dbReference type="PROSITE-ProRule" id="PRU00434"/>
    </source>
</evidence>
<evidence type="ECO:0000255" key="6">
    <source>
        <dbReference type="PROSITE-ProRule" id="PRU00441"/>
    </source>
</evidence>
<evidence type="ECO:0000256" key="7">
    <source>
        <dbReference type="SAM" id="MobiDB-lite"/>
    </source>
</evidence>
<evidence type="ECO:0000269" key="8">
    <source>
    </source>
</evidence>
<evidence type="ECO:0000269" key="9">
    <source>
    </source>
</evidence>
<evidence type="ECO:0000303" key="10">
    <source>
    </source>
</evidence>
<evidence type="ECO:0000303" key="11">
    <source>
    </source>
</evidence>
<evidence type="ECO:0000305" key="12"/>
<name>CFTR_RABIT</name>
<feature type="chain" id="PRO_0000093427" description="Cystic fibrosis transmembrane conductance regulator">
    <location>
        <begin position="1"/>
        <end position="1481"/>
    </location>
</feature>
<feature type="topological domain" description="Cytoplasmic" evidence="1">
    <location>
        <begin position="1"/>
        <end position="77"/>
    </location>
</feature>
<feature type="transmembrane region" description="Helical; Name=1" evidence="1">
    <location>
        <begin position="78"/>
        <end position="98"/>
    </location>
</feature>
<feature type="topological domain" description="Extracellular" evidence="1">
    <location>
        <begin position="99"/>
        <end position="122"/>
    </location>
</feature>
<feature type="transmembrane region" description="Helical; Name=2" evidence="1">
    <location>
        <begin position="123"/>
        <end position="146"/>
    </location>
</feature>
<feature type="topological domain" description="Cytoplasmic" evidence="1">
    <location>
        <begin position="147"/>
        <end position="195"/>
    </location>
</feature>
<feature type="transmembrane region" description="Helical; Name=3" evidence="1">
    <location>
        <begin position="196"/>
        <end position="216"/>
    </location>
</feature>
<feature type="topological domain" description="Extracellular" evidence="1">
    <location>
        <begin position="217"/>
        <end position="222"/>
    </location>
</feature>
<feature type="transmembrane region" description="Helical; Name=4" evidence="1">
    <location>
        <begin position="223"/>
        <end position="243"/>
    </location>
</feature>
<feature type="topological domain" description="Cytoplasmic" evidence="1">
    <location>
        <begin position="244"/>
        <end position="298"/>
    </location>
</feature>
<feature type="transmembrane region" description="Helical; Name=5" evidence="1">
    <location>
        <begin position="299"/>
        <end position="319"/>
    </location>
</feature>
<feature type="topological domain" description="Extracellular" evidence="1">
    <location>
        <begin position="320"/>
        <end position="339"/>
    </location>
</feature>
<feature type="transmembrane region" description="Helical; Name=6" evidence="1">
    <location>
        <begin position="340"/>
        <end position="358"/>
    </location>
</feature>
<feature type="topological domain" description="Cytoplasmic" evidence="1">
    <location>
        <begin position="359"/>
        <end position="858"/>
    </location>
</feature>
<feature type="transmembrane region" description="Helical; Name=7" evidence="1">
    <location>
        <begin position="859"/>
        <end position="879"/>
    </location>
</feature>
<feature type="topological domain" description="Extracellular" evidence="1">
    <location>
        <begin position="880"/>
        <end position="918"/>
    </location>
</feature>
<feature type="transmembrane region" description="Discontinuously helical; Name=8" evidence="1">
    <location>
        <begin position="919"/>
        <end position="939"/>
    </location>
</feature>
<feature type="topological domain" description="Cytoplasmic" evidence="1">
    <location>
        <begin position="940"/>
        <end position="990"/>
    </location>
</feature>
<feature type="transmembrane region" description="Helical; Name=9" evidence="1">
    <location>
        <begin position="991"/>
        <end position="1011"/>
    </location>
</feature>
<feature type="topological domain" description="Extracellular" evidence="1">
    <location>
        <begin position="1012"/>
        <end position="1013"/>
    </location>
</feature>
<feature type="transmembrane region" description="Helical; Name=10" evidence="1">
    <location>
        <begin position="1014"/>
        <end position="1034"/>
    </location>
</feature>
<feature type="topological domain" description="Cytoplasmic" evidence="1">
    <location>
        <begin position="1035"/>
        <end position="1095"/>
    </location>
</feature>
<feature type="transmembrane region" description="Helical; Name=11" evidence="1">
    <location>
        <begin position="1096"/>
        <end position="1116"/>
    </location>
</feature>
<feature type="topological domain" description="Extracellular" evidence="1">
    <location>
        <begin position="1117"/>
        <end position="1130"/>
    </location>
</feature>
<feature type="transmembrane region" description="Helical; Name=12" evidence="1">
    <location>
        <begin position="1131"/>
        <end position="1151"/>
    </location>
</feature>
<feature type="topological domain" description="Cytoplasmic" evidence="1">
    <location>
        <begin position="1152"/>
        <end position="1481"/>
    </location>
</feature>
<feature type="domain" description="ABC transmembrane type-1 1" evidence="6">
    <location>
        <begin position="81"/>
        <end position="365"/>
    </location>
</feature>
<feature type="domain" description="ABC transporter 1" evidence="5">
    <location>
        <begin position="423"/>
        <end position="646"/>
    </location>
</feature>
<feature type="domain" description="ABC transmembrane type-1 2" evidence="6">
    <location>
        <begin position="859"/>
        <end position="1155"/>
    </location>
</feature>
<feature type="domain" description="ABC transporter 2" evidence="5">
    <location>
        <begin position="1199"/>
        <end position="1444"/>
    </location>
</feature>
<feature type="region of interest" description="Disordered R region" evidence="1">
    <location>
        <begin position="654"/>
        <end position="831"/>
    </location>
</feature>
<feature type="region of interest" description="Interaction with GORASP2" evidence="1">
    <location>
        <begin position="1387"/>
        <end position="1481"/>
    </location>
</feature>
<feature type="region of interest" description="Disordered" evidence="7">
    <location>
        <begin position="1449"/>
        <end position="1481"/>
    </location>
</feature>
<feature type="short sequence motif" description="PDZ-binding" evidence="1">
    <location>
        <begin position="1479"/>
        <end position="1481"/>
    </location>
</feature>
<feature type="compositionally biased region" description="Basic residues" evidence="7">
    <location>
        <begin position="1450"/>
        <end position="1462"/>
    </location>
</feature>
<feature type="compositionally biased region" description="Acidic residues" evidence="7">
    <location>
        <begin position="1471"/>
        <end position="1481"/>
    </location>
</feature>
<feature type="binding site" evidence="1">
    <location>
        <position position="401"/>
    </location>
    <ligand>
        <name>ATP</name>
        <dbReference type="ChEBI" id="CHEBI:30616"/>
        <label>1</label>
    </ligand>
</feature>
<feature type="binding site" evidence="1">
    <location>
        <position position="434"/>
    </location>
    <ligand>
        <name>ATP</name>
        <dbReference type="ChEBI" id="CHEBI:30616"/>
        <label>1</label>
    </ligand>
</feature>
<feature type="binding site" evidence="5">
    <location>
        <begin position="458"/>
        <end position="465"/>
    </location>
    <ligand>
        <name>ATP</name>
        <dbReference type="ChEBI" id="CHEBI:30616"/>
        <label>1</label>
    </ligand>
</feature>
<feature type="binding site" evidence="2">
    <location>
        <position position="493"/>
    </location>
    <ligand>
        <name>ATP</name>
        <dbReference type="ChEBI" id="CHEBI:30616"/>
        <label>1</label>
    </ligand>
</feature>
<feature type="binding site" evidence="1">
    <location>
        <position position="1220"/>
    </location>
    <ligand>
        <name>ATP</name>
        <dbReference type="ChEBI" id="CHEBI:30616"/>
        <label>2</label>
    </ligand>
</feature>
<feature type="binding site" evidence="5">
    <location>
        <begin position="1245"/>
        <end position="1252"/>
    </location>
    <ligand>
        <name>ATP</name>
        <dbReference type="ChEBI" id="CHEBI:30616"/>
        <label>2</label>
    </ligand>
</feature>
<feature type="modified residue" description="Phosphoserine" evidence="1">
    <location>
        <position position="549"/>
    </location>
</feature>
<feature type="modified residue" description="Phosphoserine" evidence="1">
    <location>
        <position position="660"/>
    </location>
</feature>
<feature type="modified residue" description="Phosphoserine; by PKA" evidence="1">
    <location>
        <position position="670"/>
    </location>
</feature>
<feature type="modified residue" description="Phosphoserine" evidence="1">
    <location>
        <position position="686"/>
    </location>
</feature>
<feature type="modified residue" description="Phosphoserine" evidence="1">
    <location>
        <position position="700"/>
    </location>
</feature>
<feature type="modified residue" description="Phosphoserine" evidence="1">
    <location>
        <position position="712"/>
    </location>
</feature>
<feature type="modified residue" description="Phosphothreonine" evidence="1">
    <location>
        <position position="717"/>
    </location>
</feature>
<feature type="modified residue" description="Phosphoserine" evidence="1">
    <location>
        <position position="737"/>
    </location>
</feature>
<feature type="modified residue" description="Phosphoserine" evidence="1">
    <location>
        <position position="768"/>
    </location>
</feature>
<feature type="modified residue" description="Phosphoserine" evidence="1">
    <location>
        <position position="790"/>
    </location>
</feature>
<feature type="modified residue" description="Phosphoserine" evidence="1">
    <location>
        <position position="795"/>
    </location>
</feature>
<feature type="modified residue" description="Phosphoserine" evidence="1">
    <location>
        <position position="813"/>
    </location>
</feature>
<feature type="modified residue" description="Phosphoserine" evidence="1">
    <location>
        <position position="1445"/>
    </location>
</feature>
<feature type="modified residue" description="Phosphoserine" evidence="1">
    <location>
        <position position="1457"/>
    </location>
</feature>
<feature type="lipid moiety-binding region" description="S-palmitoyl cysteine" evidence="1">
    <location>
        <position position="524"/>
    </location>
</feature>
<feature type="lipid moiety-binding region" description="S-palmitoyl cysteine" evidence="1">
    <location>
        <position position="1396"/>
    </location>
</feature>
<feature type="glycosylation site" description="N-linked (GlcNAc...) asparagine" evidence="4">
    <location>
        <position position="894"/>
    </location>
</feature>
<feature type="glycosylation site" description="N-linked (GlcNAc...) asparagine" evidence="4">
    <location>
        <position position="900"/>
    </location>
</feature>
<feature type="glycosylation site" description="N-linked (GlcNAc...) asparagine" evidence="4">
    <location>
        <position position="909"/>
    </location>
</feature>
<feature type="cross-link" description="Glycyl lysine isopeptide (Lys-Gly) (interchain with G-Cter in ubiquitin)" evidence="1">
    <location>
        <position position="688"/>
    </location>
</feature>
<feature type="splice variant" id="VSP_028888" description="In isoform 2." evidence="10 11">
    <location>
        <begin position="164"/>
        <end position="193"/>
    </location>
</feature>
<feature type="sequence conflict" description="In Ref. 1; AAC48608." evidence="12" ref="1">
    <original>K</original>
    <variation>R</variation>
    <location>
        <position position="3"/>
    </location>
</feature>
<feature type="sequence conflict" description="In Ref. 1; AAC48608." evidence="12" ref="1">
    <original>K</original>
    <variation>N</variation>
    <location>
        <position position="66"/>
    </location>
</feature>
<feature type="sequence conflict" description="In Ref. 1; AAC48608." evidence="12" ref="1">
    <original>L</original>
    <variation>F</variation>
    <location>
        <position position="87"/>
    </location>
</feature>
<feature type="sequence conflict" description="In Ref. 1; AAC48608." evidence="12" ref="1">
    <original>V</original>
    <variation>E</variation>
    <location>
        <position position="115"/>
    </location>
</feature>
<feature type="sequence conflict" description="In Ref. 6; no nucleotide entry." evidence="12" ref="6">
    <original>NN</original>
    <variation>DS</variation>
    <location>
        <begin position="426"/>
        <end position="427"/>
    </location>
</feature>
<feature type="sequence conflict" description="In Ref. 6; no nucleotide entry." evidence="12" ref="6">
    <original>A</original>
    <variation>T</variation>
    <location>
        <position position="438"/>
    </location>
</feature>
<feature type="sequence conflict" description="In Ref. 1; AAC48608." evidence="12" ref="1">
    <original>K</original>
    <variation>E</variation>
    <location>
        <position position="442"/>
    </location>
</feature>
<feature type="sequence conflict" description="In Ref. 6; no nucleotide entry." evidence="12" ref="6">
    <original>S</original>
    <variation>N</variation>
    <location>
        <position position="445"/>
    </location>
</feature>
<feature type="sequence conflict" description="In Ref. 6; no nucleotide entry." evidence="12" ref="6">
    <original>MM</original>
    <variation>II</variation>
    <location>
        <begin position="469"/>
        <end position="470"/>
    </location>
</feature>
<feature type="sequence conflict" description="In Ref. 1; AAC48608." evidence="12" ref="1">
    <original>M</original>
    <variation>T</variation>
    <location>
        <position position="472"/>
    </location>
</feature>
<feature type="sequence conflict" description="In Ref. 6; no nucleotide entry." evidence="12" ref="6">
    <original>K</original>
    <variation>N</variation>
    <location>
        <position position="483"/>
    </location>
</feature>
<feature type="sequence conflict" description="In Ref. 1; AAC48608 and 6; no nucleotide entry." evidence="12" ref="1 6">
    <original>K</original>
    <variation>R</variation>
    <location>
        <position position="518"/>
    </location>
</feature>
<feature type="sequence conflict" description="In Ref. 6; no nucleotide entry." evidence="12" ref="6">
    <original>T</original>
    <variation>A</variation>
    <location>
        <position position="534"/>
    </location>
</feature>
<feature type="sequence conflict" description="In Ref. 6; no nucleotide entry." evidence="12" ref="6">
    <original>T</original>
    <variation>I</variation>
    <location>
        <position position="539"/>
    </location>
</feature>
<feature type="sequence conflict" description="In Ref. 6; no nucleotide entry." evidence="12" ref="6">
    <original>I</original>
    <variation>V</variation>
    <location>
        <position position="546"/>
    </location>
</feature>
<feature type="sequence conflict" description="In Ref. 1; AAC48608." evidence="12" ref="1">
    <original>L</original>
    <variation>M</variation>
    <location>
        <position position="602"/>
    </location>
</feature>
<feature type="sequence conflict" description="In Ref. 1; AAC48608." evidence="12" ref="1">
    <original>I</original>
    <variation>V</variation>
    <location>
        <position position="677"/>
    </location>
</feature>
<feature type="sequence conflict" description="In Ref. 1; AAC48608." evidence="12" ref="1">
    <original>P</original>
    <variation>L</variation>
    <location>
        <position position="715"/>
    </location>
</feature>
<feature type="sequence conflict" description="In Ref. 1; AAC48608." evidence="12" ref="1">
    <original>S</original>
    <variation>T</variation>
    <location>
        <position position="731"/>
    </location>
</feature>
<feature type="sequence conflict" description="In Ref. 7; AAA31200." evidence="12" ref="7">
    <original>L</original>
    <variation>V</variation>
    <location>
        <position position="749"/>
    </location>
</feature>
<feature type="sequence conflict" description="In Ref. 1; AAC48608." evidence="12" ref="1">
    <original>A</original>
    <variation>T</variation>
    <location>
        <position position="791"/>
    </location>
</feature>
<feature type="sequence conflict" description="In Ref. 4; no nucleotide entry." evidence="12" ref="4">
    <original>AP</original>
    <variation>PL</variation>
    <location>
        <begin position="888"/>
        <end position="889"/>
    </location>
</feature>
<feature type="sequence conflict" description="In Ref. 1; AAC48608." evidence="12" ref="1">
    <original>R</original>
    <variation>Q</variation>
    <location>
        <position position="1158"/>
    </location>
</feature>
<feature type="sequence conflict" description="In Ref. 1; AAC48608." evidence="12" ref="1">
    <original>K</original>
    <variation>M</variation>
    <location>
        <position position="1165"/>
    </location>
</feature>
<feature type="sequence conflict" description="In Ref. 1; AAC48608." evidence="12" ref="1">
    <original>ET</original>
    <variation>A</variation>
    <location>
        <begin position="1173"/>
        <end position="1174"/>
    </location>
</feature>
<feature type="sequence conflict" description="In Ref. 1; AAC48608." evidence="12" ref="1">
    <original>N</original>
    <variation>S</variation>
    <location>
        <position position="1263"/>
    </location>
</feature>
<feature type="sequence conflict" description="In Ref. 3; AAY89018." evidence="12" ref="3">
    <original>G</original>
    <variation>E</variation>
    <location>
        <position position="1478"/>
    </location>
</feature>
<keyword id="KW-0025">Alternative splicing</keyword>
<keyword id="KW-0067">ATP-binding</keyword>
<keyword id="KW-1003">Cell membrane</keyword>
<keyword id="KW-0868">Chloride</keyword>
<keyword id="KW-0869">Chloride channel</keyword>
<keyword id="KW-0256">Endoplasmic reticulum</keyword>
<keyword id="KW-0967">Endosome</keyword>
<keyword id="KW-0325">Glycoprotein</keyword>
<keyword id="KW-0407">Ion channel</keyword>
<keyword id="KW-0406">Ion transport</keyword>
<keyword id="KW-0413">Isomerase</keyword>
<keyword id="KW-1017">Isopeptide bond</keyword>
<keyword id="KW-0449">Lipoprotein</keyword>
<keyword id="KW-0472">Membrane</keyword>
<keyword id="KW-0547">Nucleotide-binding</keyword>
<keyword id="KW-0539">Nucleus</keyword>
<keyword id="KW-0564">Palmitate</keyword>
<keyword id="KW-0597">Phosphoprotein</keyword>
<keyword id="KW-1185">Reference proteome</keyword>
<keyword id="KW-0677">Repeat</keyword>
<keyword id="KW-0812">Transmembrane</keyword>
<keyword id="KW-1133">Transmembrane helix</keyword>
<keyword id="KW-0813">Transport</keyword>
<keyword id="KW-0832">Ubl conjugation</keyword>
<dbReference type="EC" id="5.6.1.6" evidence="1"/>
<dbReference type="EMBL" id="U40227">
    <property type="protein sequence ID" value="AAC48608.1"/>
    <property type="molecule type" value="mRNA"/>
</dbReference>
<dbReference type="EMBL" id="AF189720">
    <property type="protein sequence ID" value="AAF01067.1"/>
    <property type="molecule type" value="mRNA"/>
</dbReference>
<dbReference type="EMBL" id="DP000006">
    <property type="protein sequence ID" value="AAY89018.1"/>
    <property type="molecule type" value="Genomic_DNA"/>
</dbReference>
<dbReference type="EMBL" id="AF186108">
    <property type="protein sequence ID" value="AAD56415.1"/>
    <property type="molecule type" value="mRNA"/>
</dbReference>
<dbReference type="EMBL" id="M96681">
    <property type="protein sequence ID" value="AAA31200.1"/>
    <property type="molecule type" value="Genomic_DNA"/>
</dbReference>
<dbReference type="PIR" id="JC6139">
    <property type="entry name" value="JC6139"/>
</dbReference>
<dbReference type="RefSeq" id="NP_001076185.1">
    <molecule id="Q00554-1"/>
    <property type="nucleotide sequence ID" value="NM_001082716.1"/>
</dbReference>
<dbReference type="SMR" id="Q00554"/>
<dbReference type="FunCoup" id="Q00554">
    <property type="interactions" value="17"/>
</dbReference>
<dbReference type="STRING" id="9986.ENSOCUP00000034709"/>
<dbReference type="GlyCosmos" id="Q00554">
    <property type="glycosylation" value="3 sites, No reported glycans"/>
</dbReference>
<dbReference type="PaxDb" id="9986-ENSOCUP00000009248"/>
<dbReference type="GeneID" id="100009471"/>
<dbReference type="KEGG" id="ocu:100009471"/>
<dbReference type="CTD" id="1080"/>
<dbReference type="eggNOG" id="KOG0054">
    <property type="taxonomic scope" value="Eukaryota"/>
</dbReference>
<dbReference type="InParanoid" id="Q00554"/>
<dbReference type="OrthoDB" id="6500128at2759"/>
<dbReference type="Proteomes" id="UP000001811">
    <property type="component" value="Unplaced"/>
</dbReference>
<dbReference type="GO" id="GO:0016324">
    <property type="term" value="C:apical plasma membrane"/>
    <property type="evidence" value="ECO:0000250"/>
    <property type="project" value="UniProtKB"/>
</dbReference>
<dbReference type="GO" id="GO:0034707">
    <property type="term" value="C:chloride channel complex"/>
    <property type="evidence" value="ECO:0007669"/>
    <property type="project" value="UniProtKB-KW"/>
</dbReference>
<dbReference type="GO" id="GO:0005829">
    <property type="term" value="C:cytosol"/>
    <property type="evidence" value="ECO:0007669"/>
    <property type="project" value="TreeGrafter"/>
</dbReference>
<dbReference type="GO" id="GO:0005769">
    <property type="term" value="C:early endosome"/>
    <property type="evidence" value="ECO:0000250"/>
    <property type="project" value="UniProtKB"/>
</dbReference>
<dbReference type="GO" id="GO:0031901">
    <property type="term" value="C:early endosome membrane"/>
    <property type="evidence" value="ECO:0007669"/>
    <property type="project" value="UniProtKB-SubCell"/>
</dbReference>
<dbReference type="GO" id="GO:0005789">
    <property type="term" value="C:endoplasmic reticulum membrane"/>
    <property type="evidence" value="ECO:0000250"/>
    <property type="project" value="UniProtKB"/>
</dbReference>
<dbReference type="GO" id="GO:0016020">
    <property type="term" value="C:membrane"/>
    <property type="evidence" value="ECO:0000250"/>
    <property type="project" value="UniProtKB"/>
</dbReference>
<dbReference type="GO" id="GO:0005634">
    <property type="term" value="C:nucleus"/>
    <property type="evidence" value="ECO:0000250"/>
    <property type="project" value="UniProtKB"/>
</dbReference>
<dbReference type="GO" id="GO:0005886">
    <property type="term" value="C:plasma membrane"/>
    <property type="evidence" value="ECO:0000250"/>
    <property type="project" value="UniProtKB"/>
</dbReference>
<dbReference type="GO" id="GO:0055038">
    <property type="term" value="C:recycling endosome membrane"/>
    <property type="evidence" value="ECO:0007669"/>
    <property type="project" value="UniProtKB-SubCell"/>
</dbReference>
<dbReference type="GO" id="GO:0140359">
    <property type="term" value="F:ABC-type transporter activity"/>
    <property type="evidence" value="ECO:0007669"/>
    <property type="project" value="InterPro"/>
</dbReference>
<dbReference type="GO" id="GO:0005524">
    <property type="term" value="F:ATP binding"/>
    <property type="evidence" value="ECO:0007669"/>
    <property type="project" value="UniProtKB-KW"/>
</dbReference>
<dbReference type="GO" id="GO:0016887">
    <property type="term" value="F:ATP hydrolysis activity"/>
    <property type="evidence" value="ECO:0000250"/>
    <property type="project" value="UniProtKB"/>
</dbReference>
<dbReference type="GO" id="GO:0015106">
    <property type="term" value="F:bicarbonate transmembrane transporter activity"/>
    <property type="evidence" value="ECO:0000250"/>
    <property type="project" value="UniProtKB"/>
</dbReference>
<dbReference type="GO" id="GO:0005254">
    <property type="term" value="F:chloride channel activity"/>
    <property type="evidence" value="ECO:0000250"/>
    <property type="project" value="UniProtKB"/>
</dbReference>
<dbReference type="GO" id="GO:0019869">
    <property type="term" value="F:chloride channel inhibitor activity"/>
    <property type="evidence" value="ECO:0000250"/>
    <property type="project" value="UniProtKB"/>
</dbReference>
<dbReference type="GO" id="GO:0015108">
    <property type="term" value="F:chloride transmembrane transporter activity"/>
    <property type="evidence" value="ECO:0000250"/>
    <property type="project" value="UniProtKB"/>
</dbReference>
<dbReference type="GO" id="GO:0005260">
    <property type="term" value="F:intracellularly ATP-gated chloride channel activity"/>
    <property type="evidence" value="ECO:0000250"/>
    <property type="project" value="UniProtKB"/>
</dbReference>
<dbReference type="GO" id="GO:0015701">
    <property type="term" value="P:bicarbonate transport"/>
    <property type="evidence" value="ECO:0000250"/>
    <property type="project" value="UniProtKB"/>
</dbReference>
<dbReference type="GO" id="GO:0071320">
    <property type="term" value="P:cellular response to cAMP"/>
    <property type="evidence" value="ECO:0000250"/>
    <property type="project" value="UniProtKB"/>
</dbReference>
<dbReference type="GO" id="GO:1904322">
    <property type="term" value="P:cellular response to forskolin"/>
    <property type="evidence" value="ECO:0000250"/>
    <property type="project" value="UniProtKB"/>
</dbReference>
<dbReference type="GO" id="GO:1902476">
    <property type="term" value="P:chloride transmembrane transport"/>
    <property type="evidence" value="ECO:0000250"/>
    <property type="project" value="UniProtKB"/>
</dbReference>
<dbReference type="GO" id="GO:0051454">
    <property type="term" value="P:intracellular pH elevation"/>
    <property type="evidence" value="ECO:0000250"/>
    <property type="project" value="UniProtKB"/>
</dbReference>
<dbReference type="GO" id="GO:0060081">
    <property type="term" value="P:membrane hyperpolarization"/>
    <property type="evidence" value="ECO:0000250"/>
    <property type="project" value="UniProtKB"/>
</dbReference>
<dbReference type="GO" id="GO:0050891">
    <property type="term" value="P:multicellular organismal-level water homeostasis"/>
    <property type="evidence" value="ECO:0000250"/>
    <property type="project" value="UniProtKB"/>
</dbReference>
<dbReference type="GO" id="GO:0034976">
    <property type="term" value="P:response to endoplasmic reticulum stress"/>
    <property type="evidence" value="ECO:0000250"/>
    <property type="project" value="UniProtKB"/>
</dbReference>
<dbReference type="GO" id="GO:0048240">
    <property type="term" value="P:sperm capacitation"/>
    <property type="evidence" value="ECO:0000250"/>
    <property type="project" value="UniProtKB"/>
</dbReference>
<dbReference type="GO" id="GO:0035377">
    <property type="term" value="P:transepithelial water transport"/>
    <property type="evidence" value="ECO:0000250"/>
    <property type="project" value="UniProtKB"/>
</dbReference>
<dbReference type="CDD" id="cd18594">
    <property type="entry name" value="ABC_6TM_CFTR_D1"/>
    <property type="match status" value="1"/>
</dbReference>
<dbReference type="CDD" id="cd18600">
    <property type="entry name" value="ABC_6TM_CFTR_D2"/>
    <property type="match status" value="1"/>
</dbReference>
<dbReference type="CDD" id="cd03291">
    <property type="entry name" value="ABCC_CFTR1"/>
    <property type="match status" value="1"/>
</dbReference>
<dbReference type="CDD" id="cd03289">
    <property type="entry name" value="ABCC_CFTR2"/>
    <property type="match status" value="1"/>
</dbReference>
<dbReference type="FunFam" id="1.20.1560.10:FF:000017">
    <property type="entry name" value="Cystic fibrosis transmembrane conductance regulator"/>
    <property type="match status" value="1"/>
</dbReference>
<dbReference type="FunFam" id="1.20.1560.10:FF:000019">
    <property type="entry name" value="Cystic fibrosis transmembrane conductance regulator"/>
    <property type="match status" value="1"/>
</dbReference>
<dbReference type="FunFam" id="3.40.50.300:FF:000581">
    <property type="entry name" value="Cystic fibrosis transmembrane conductance regulator"/>
    <property type="match status" value="1"/>
</dbReference>
<dbReference type="FunFam" id="3.40.50.300:FF:000591">
    <property type="entry name" value="Cystic fibrosis transmembrane conductance regulator"/>
    <property type="match status" value="1"/>
</dbReference>
<dbReference type="Gene3D" id="1.20.1560.10">
    <property type="entry name" value="ABC transporter type 1, transmembrane domain"/>
    <property type="match status" value="2"/>
</dbReference>
<dbReference type="Gene3D" id="3.40.50.300">
    <property type="entry name" value="P-loop containing nucleotide triphosphate hydrolases"/>
    <property type="match status" value="2"/>
</dbReference>
<dbReference type="InterPro" id="IPR003593">
    <property type="entry name" value="AAA+_ATPase"/>
</dbReference>
<dbReference type="InterPro" id="IPR011527">
    <property type="entry name" value="ABC1_TM_dom"/>
</dbReference>
<dbReference type="InterPro" id="IPR036640">
    <property type="entry name" value="ABC1_TM_sf"/>
</dbReference>
<dbReference type="InterPro" id="IPR003439">
    <property type="entry name" value="ABC_transporter-like_ATP-bd"/>
</dbReference>
<dbReference type="InterPro" id="IPR017871">
    <property type="entry name" value="ABC_transporter-like_CS"/>
</dbReference>
<dbReference type="InterPro" id="IPR050173">
    <property type="entry name" value="ABC_transporter_C-like"/>
</dbReference>
<dbReference type="InterPro" id="IPR009147">
    <property type="entry name" value="CFTR/ABCC7"/>
</dbReference>
<dbReference type="InterPro" id="IPR047082">
    <property type="entry name" value="CFTR1_ATP-bd_dom1"/>
</dbReference>
<dbReference type="InterPro" id="IPR025837">
    <property type="entry name" value="CFTR_reg_dom"/>
</dbReference>
<dbReference type="InterPro" id="IPR027417">
    <property type="entry name" value="P-loop_NTPase"/>
</dbReference>
<dbReference type="NCBIfam" id="TIGR01271">
    <property type="entry name" value="CFTR_protein"/>
    <property type="match status" value="1"/>
</dbReference>
<dbReference type="PANTHER" id="PTHR24223">
    <property type="entry name" value="ATP-BINDING CASSETTE SUB-FAMILY C"/>
    <property type="match status" value="1"/>
</dbReference>
<dbReference type="PANTHER" id="PTHR24223:SF19">
    <property type="entry name" value="CYSTIC FIBROSIS TRANSMEMBRANE CONDUCTANCE REGULATOR"/>
    <property type="match status" value="1"/>
</dbReference>
<dbReference type="Pfam" id="PF00664">
    <property type="entry name" value="ABC_membrane"/>
    <property type="match status" value="2"/>
</dbReference>
<dbReference type="Pfam" id="PF00005">
    <property type="entry name" value="ABC_tran"/>
    <property type="match status" value="2"/>
</dbReference>
<dbReference type="Pfam" id="PF14396">
    <property type="entry name" value="CFTR_R"/>
    <property type="match status" value="1"/>
</dbReference>
<dbReference type="PRINTS" id="PR01851">
    <property type="entry name" value="CYSFIBREGLTR"/>
</dbReference>
<dbReference type="SMART" id="SM00382">
    <property type="entry name" value="AAA"/>
    <property type="match status" value="2"/>
</dbReference>
<dbReference type="SUPFAM" id="SSF90123">
    <property type="entry name" value="ABC transporter transmembrane region"/>
    <property type="match status" value="2"/>
</dbReference>
<dbReference type="SUPFAM" id="SSF52540">
    <property type="entry name" value="P-loop containing nucleoside triphosphate hydrolases"/>
    <property type="match status" value="2"/>
</dbReference>
<dbReference type="PROSITE" id="PS50929">
    <property type="entry name" value="ABC_TM1F"/>
    <property type="match status" value="2"/>
</dbReference>
<dbReference type="PROSITE" id="PS00211">
    <property type="entry name" value="ABC_TRANSPORTER_1"/>
    <property type="match status" value="1"/>
</dbReference>
<dbReference type="PROSITE" id="PS50893">
    <property type="entry name" value="ABC_TRANSPORTER_2"/>
    <property type="match status" value="2"/>
</dbReference>
<protein>
    <recommendedName>
        <fullName evidence="1">Cystic fibrosis transmembrane conductance regulator</fullName>
        <shortName>CFTR</shortName>
    </recommendedName>
    <alternativeName>
        <fullName>ATP-binding cassette sub-family C member 7</fullName>
    </alternativeName>
    <alternativeName>
        <fullName>Channel conductance-controlling ATPase</fullName>
        <ecNumber evidence="1">5.6.1.6</ecNumber>
    </alternativeName>
    <alternativeName>
        <fullName>cAMP-dependent chloride channel</fullName>
    </alternativeName>
</protein>
<proteinExistence type="evidence at transcript level"/>